<reference key="1">
    <citation type="journal article" date="2004" name="Nature">
        <title>Genome evolution in yeasts.</title>
        <authorList>
            <person name="Dujon B."/>
            <person name="Sherman D."/>
            <person name="Fischer G."/>
            <person name="Durrens P."/>
            <person name="Casaregola S."/>
            <person name="Lafontaine I."/>
            <person name="de Montigny J."/>
            <person name="Marck C."/>
            <person name="Neuveglise C."/>
            <person name="Talla E."/>
            <person name="Goffard N."/>
            <person name="Frangeul L."/>
            <person name="Aigle M."/>
            <person name="Anthouard V."/>
            <person name="Babour A."/>
            <person name="Barbe V."/>
            <person name="Barnay S."/>
            <person name="Blanchin S."/>
            <person name="Beckerich J.-M."/>
            <person name="Beyne E."/>
            <person name="Bleykasten C."/>
            <person name="Boisrame A."/>
            <person name="Boyer J."/>
            <person name="Cattolico L."/>
            <person name="Confanioleri F."/>
            <person name="de Daruvar A."/>
            <person name="Despons L."/>
            <person name="Fabre E."/>
            <person name="Fairhead C."/>
            <person name="Ferry-Dumazet H."/>
            <person name="Groppi A."/>
            <person name="Hantraye F."/>
            <person name="Hennequin C."/>
            <person name="Jauniaux N."/>
            <person name="Joyet P."/>
            <person name="Kachouri R."/>
            <person name="Kerrest A."/>
            <person name="Koszul R."/>
            <person name="Lemaire M."/>
            <person name="Lesur I."/>
            <person name="Ma L."/>
            <person name="Muller H."/>
            <person name="Nicaud J.-M."/>
            <person name="Nikolski M."/>
            <person name="Oztas S."/>
            <person name="Ozier-Kalogeropoulos O."/>
            <person name="Pellenz S."/>
            <person name="Potier S."/>
            <person name="Richard G.-F."/>
            <person name="Straub M.-L."/>
            <person name="Suleau A."/>
            <person name="Swennen D."/>
            <person name="Tekaia F."/>
            <person name="Wesolowski-Louvel M."/>
            <person name="Westhof E."/>
            <person name="Wirth B."/>
            <person name="Zeniou-Meyer M."/>
            <person name="Zivanovic Y."/>
            <person name="Bolotin-Fukuhara M."/>
            <person name="Thierry A."/>
            <person name="Bouchier C."/>
            <person name="Caudron B."/>
            <person name="Scarpelli C."/>
            <person name="Gaillardin C."/>
            <person name="Weissenbach J."/>
            <person name="Wincker P."/>
            <person name="Souciet J.-L."/>
        </authorList>
    </citation>
    <scope>NUCLEOTIDE SEQUENCE [LARGE SCALE GENOMIC DNA]</scope>
    <source>
        <strain>ATCC 36239 / CBS 767 / BCRC 21394 / JCM 1990 / NBRC 0083 / IGC 2968</strain>
    </source>
</reference>
<feature type="chain" id="PRO_0000127659" description="DASH complex subunit DAM1">
    <location>
        <begin position="1"/>
        <end position="294"/>
    </location>
</feature>
<feature type="region of interest" description="Disordered" evidence="4">
    <location>
        <begin position="1"/>
        <end position="47"/>
    </location>
</feature>
<feature type="region of interest" description="Disordered" evidence="4">
    <location>
        <begin position="140"/>
        <end position="294"/>
    </location>
</feature>
<feature type="coiled-coil region" evidence="3">
    <location>
        <begin position="121"/>
        <end position="163"/>
    </location>
</feature>
<feature type="compositionally biased region" description="Polar residues" evidence="4">
    <location>
        <begin position="1"/>
        <end position="11"/>
    </location>
</feature>
<feature type="compositionally biased region" description="Basic residues" evidence="4">
    <location>
        <begin position="13"/>
        <end position="23"/>
    </location>
</feature>
<feature type="compositionally biased region" description="Basic and acidic residues" evidence="4">
    <location>
        <begin position="160"/>
        <end position="171"/>
    </location>
</feature>
<feature type="compositionally biased region" description="Pro residues" evidence="4">
    <location>
        <begin position="227"/>
        <end position="237"/>
    </location>
</feature>
<feature type="compositionally biased region" description="Polar residues" evidence="4">
    <location>
        <begin position="262"/>
        <end position="273"/>
    </location>
</feature>
<name>DAM1_DEBHA</name>
<evidence type="ECO:0000250" key="1">
    <source>
        <dbReference type="UniProtKB" id="P53267"/>
    </source>
</evidence>
<evidence type="ECO:0000250" key="2">
    <source>
        <dbReference type="UniProtKB" id="Q9HDZ6"/>
    </source>
</evidence>
<evidence type="ECO:0000255" key="3"/>
<evidence type="ECO:0000256" key="4">
    <source>
        <dbReference type="SAM" id="MobiDB-lite"/>
    </source>
</evidence>
<evidence type="ECO:0000305" key="5"/>
<comment type="function">
    <text evidence="1">Component of the DASH complex that connects microtubules with kinetochores and couples microtubule depolymerisation to chromosome movement; it is involved in retrieving kinetochores to the spindle poles before their re-orientation on the spindle in early mitosis and allows microtubule depolymerization to pull chromosomes apart and resist detachment during anaphase. Kinetochores, consisting of a centromere-associated inner segment and a microtubule-contacting outer segment, play a crucial role in chromosome segregation by mediating the physical connection between centromeric DNA and microtubules. Kinetochores also serve as an input point for the spindle assembly checkpoint, which delays anaphase until all chromosomes have bioriented on the mitotic spindle.</text>
</comment>
<comment type="subunit">
    <text evidence="1 2">Component of the DASH complex consisting of ASK1, DAD1, DAD2, DAD3, DAD4, DAM1, DUO1, HSK3, SPC19 and SPC34, with a stoichiometry of one copy of each subunit per complex. Multiple DASH complexes oligomerize to form a ring that encircles spindle microtubules and organizes the rod-like NDC80 complexes of the outer kinetochore. DASH complex oligomerization strengthens microtubule attachments. Within the complex, DAM1 and DUO1 may form the microtubule connections (By similarity). On cytoplasmic microtubules, DASH complexes appear to form patches instead of rings (By similarity). Interacts with the outer kinetochore component NDC80; the interaction is direct (By similarity).</text>
</comment>
<comment type="subcellular location">
    <subcellularLocation>
        <location evidence="1">Nucleus</location>
    </subcellularLocation>
    <subcellularLocation>
        <location evidence="1">Cytoplasm</location>
        <location evidence="1">Cytoskeleton</location>
        <location evidence="1">Spindle</location>
    </subcellularLocation>
    <subcellularLocation>
        <location evidence="1">Chromosome</location>
        <location evidence="1">Centromere</location>
        <location evidence="1">Kinetochore</location>
    </subcellularLocation>
</comment>
<comment type="similarity">
    <text evidence="5">Belongs to the DASH complex DAM1 family.</text>
</comment>
<proteinExistence type="inferred from homology"/>
<accession>Q6BWK6</accession>
<sequence>MASSPRPTTPNSQKKRSGRRQSHRSSGAYNILPQSPKIHYPVDPDNLPLEAPGNTEKFESLSDALEELDVNMTNLQSIHEAISDGFNESFASFLYGLSITMWCVDFPGCPSRNQWEKLKLVEGLDDRISELAEKIRSHREENERLKNRLASNVVESTEEVENHSDSHENRKPQHSHRVGKGPTRQVDEGDDTYMTNEGSFVVNPSAPSATRIPQPVKTAPRRFTKHTPPPPPPPPPADTSMHSSYRGPNLNQPPRYMRGLFDSTNRPTTPSNNRSKRVANPNRIQKATGRPPFR</sequence>
<gene>
    <name type="primary">DAM1</name>
    <name type="ordered locus">DEHA2B10582g</name>
</gene>
<organism>
    <name type="scientific">Debaryomyces hansenii (strain ATCC 36239 / CBS 767 / BCRC 21394 / JCM 1990 / NBRC 0083 / IGC 2968)</name>
    <name type="common">Yeast</name>
    <name type="synonym">Torulaspora hansenii</name>
    <dbReference type="NCBI Taxonomy" id="284592"/>
    <lineage>
        <taxon>Eukaryota</taxon>
        <taxon>Fungi</taxon>
        <taxon>Dikarya</taxon>
        <taxon>Ascomycota</taxon>
        <taxon>Saccharomycotina</taxon>
        <taxon>Pichiomycetes</taxon>
        <taxon>Debaryomycetaceae</taxon>
        <taxon>Debaryomyces</taxon>
    </lineage>
</organism>
<protein>
    <recommendedName>
        <fullName>DASH complex subunit DAM1</fullName>
    </recommendedName>
    <alternativeName>
        <fullName>Outer kinetochore protein DAM1</fullName>
    </alternativeName>
</protein>
<dbReference type="EMBL" id="CR382134">
    <property type="protein sequence ID" value="CAG85417.2"/>
    <property type="molecule type" value="Genomic_DNA"/>
</dbReference>
<dbReference type="RefSeq" id="XP_457413.2">
    <property type="nucleotide sequence ID" value="XM_457413.1"/>
</dbReference>
<dbReference type="SMR" id="Q6BWK6"/>
<dbReference type="FunCoup" id="Q6BWK6">
    <property type="interactions" value="178"/>
</dbReference>
<dbReference type="STRING" id="284592.Q6BWK6"/>
<dbReference type="GeneID" id="2913340"/>
<dbReference type="KEGG" id="dha:DEHA2B10582g"/>
<dbReference type="VEuPathDB" id="FungiDB:DEHA2B10582g"/>
<dbReference type="eggNOG" id="ENOG502S08R">
    <property type="taxonomic scope" value="Eukaryota"/>
</dbReference>
<dbReference type="HOGENOM" id="CLU_092107_0_0_1"/>
<dbReference type="InParanoid" id="Q6BWK6"/>
<dbReference type="OMA" id="PKIHYPV"/>
<dbReference type="OrthoDB" id="5586015at2759"/>
<dbReference type="Proteomes" id="UP000000599">
    <property type="component" value="Chromosome B"/>
</dbReference>
<dbReference type="GO" id="GO:0005737">
    <property type="term" value="C:cytoplasm"/>
    <property type="evidence" value="ECO:0007669"/>
    <property type="project" value="UniProtKB-KW"/>
</dbReference>
<dbReference type="GO" id="GO:0042729">
    <property type="term" value="C:DASH complex"/>
    <property type="evidence" value="ECO:0000250"/>
    <property type="project" value="UniProtKB"/>
</dbReference>
<dbReference type="GO" id="GO:1990537">
    <property type="term" value="C:mitotic spindle polar microtubule"/>
    <property type="evidence" value="ECO:0007669"/>
    <property type="project" value="TreeGrafter"/>
</dbReference>
<dbReference type="GO" id="GO:0044732">
    <property type="term" value="C:mitotic spindle pole body"/>
    <property type="evidence" value="ECO:0007669"/>
    <property type="project" value="TreeGrafter"/>
</dbReference>
<dbReference type="GO" id="GO:0008608">
    <property type="term" value="P:attachment of spindle microtubules to kinetochore"/>
    <property type="evidence" value="ECO:0000250"/>
    <property type="project" value="UniProtKB"/>
</dbReference>
<dbReference type="GO" id="GO:0051301">
    <property type="term" value="P:cell division"/>
    <property type="evidence" value="ECO:0007669"/>
    <property type="project" value="UniProtKB-KW"/>
</dbReference>
<dbReference type="GO" id="GO:1990758">
    <property type="term" value="P:mitotic sister chromatid biorientation"/>
    <property type="evidence" value="ECO:0000250"/>
    <property type="project" value="UniProtKB"/>
</dbReference>
<dbReference type="GO" id="GO:1990976">
    <property type="term" value="P:protein transport along microtubule to mitotic spindle pole body"/>
    <property type="evidence" value="ECO:0000250"/>
    <property type="project" value="UniProtKB"/>
</dbReference>
<dbReference type="InterPro" id="IPR013962">
    <property type="entry name" value="DASH_Dam1"/>
</dbReference>
<dbReference type="PANTHER" id="PTHR28113">
    <property type="entry name" value="DASH COMPLEX SUBUNIT DAM1"/>
    <property type="match status" value="1"/>
</dbReference>
<dbReference type="PANTHER" id="PTHR28113:SF1">
    <property type="entry name" value="DASH COMPLEX SUBUNIT DAM1"/>
    <property type="match status" value="1"/>
</dbReference>
<dbReference type="Pfam" id="PF08653">
    <property type="entry name" value="DASH_Dam1"/>
    <property type="match status" value="1"/>
</dbReference>
<keyword id="KW-0131">Cell cycle</keyword>
<keyword id="KW-0132">Cell division</keyword>
<keyword id="KW-0137">Centromere</keyword>
<keyword id="KW-0158">Chromosome</keyword>
<keyword id="KW-0159">Chromosome partition</keyword>
<keyword id="KW-0175">Coiled coil</keyword>
<keyword id="KW-0963">Cytoplasm</keyword>
<keyword id="KW-0206">Cytoskeleton</keyword>
<keyword id="KW-0995">Kinetochore</keyword>
<keyword id="KW-0493">Microtubule</keyword>
<keyword id="KW-0498">Mitosis</keyword>
<keyword id="KW-0539">Nucleus</keyword>
<keyword id="KW-1185">Reference proteome</keyword>